<feature type="initiator methionine" description="Removed" evidence="1">
    <location>
        <position position="1"/>
    </location>
</feature>
<feature type="chain" id="PRO_0000071713" description="ATP synthase protein I">
    <location>
        <begin position="2"/>
        <end position="126"/>
    </location>
</feature>
<feature type="topological domain" description="Cytoplasmic" evidence="2">
    <location>
        <begin position="2"/>
        <end position="14"/>
    </location>
</feature>
<feature type="transmembrane region" description="Helical" evidence="2">
    <location>
        <begin position="15"/>
        <end position="35"/>
    </location>
</feature>
<feature type="topological domain" description="Periplasmic" evidence="2">
    <location>
        <begin position="36"/>
        <end position="37"/>
    </location>
</feature>
<feature type="transmembrane region" description="Helical" evidence="2">
    <location>
        <begin position="38"/>
        <end position="58"/>
    </location>
</feature>
<feature type="topological domain" description="Cytoplasmic" evidence="2">
    <location>
        <begin position="59"/>
        <end position="70"/>
    </location>
</feature>
<feature type="transmembrane region" description="Helical" evidence="2">
    <location>
        <begin position="71"/>
        <end position="94"/>
    </location>
</feature>
<feature type="topological domain" description="Periplasmic" evidence="2">
    <location>
        <begin position="95"/>
        <end position="100"/>
    </location>
</feature>
<feature type="transmembrane region" description="Helical" evidence="2">
    <location>
        <begin position="101"/>
        <end position="117"/>
    </location>
</feature>
<feature type="topological domain" description="Cytoplasmic" evidence="2">
    <location>
        <begin position="118"/>
        <end position="126"/>
    </location>
</feature>
<keyword id="KW-0997">Cell inner membrane</keyword>
<keyword id="KW-1003">Cell membrane</keyword>
<keyword id="KW-0138">CF(0)</keyword>
<keyword id="KW-0375">Hydrogen ion transport</keyword>
<keyword id="KW-0406">Ion transport</keyword>
<keyword id="KW-0472">Membrane</keyword>
<keyword id="KW-1185">Reference proteome</keyword>
<keyword id="KW-0812">Transmembrane</keyword>
<keyword id="KW-1133">Transmembrane helix</keyword>
<keyword id="KW-0813">Transport</keyword>
<protein>
    <recommendedName>
        <fullName>ATP synthase protein I</fullName>
    </recommendedName>
</protein>
<comment type="function">
    <text>A possible function for this protein is to guide the assembly of the membrane sector of the ATPase enzyme complex.</text>
</comment>
<comment type="subcellular location">
    <subcellularLocation>
        <location evidence="1">Cell inner membrane</location>
        <topology evidence="1">Multi-pass membrane protein</topology>
    </subcellularLocation>
</comment>
<comment type="similarity">
    <text evidence="3">Belongs to the bacterial AtpI family.</text>
</comment>
<comment type="sequence caution" evidence="3">
    <conflict type="erroneous initiation">
        <sequence resource="EMBL-CDS" id="AAN45259"/>
    </conflict>
</comment>
<comment type="sequence caution" evidence="3">
    <conflict type="erroneous initiation">
        <sequence resource="EMBL-CDS" id="AAP18938"/>
    </conflict>
</comment>
<reference key="1">
    <citation type="journal article" date="2002" name="Nucleic Acids Res.">
        <title>Genome sequence of Shigella flexneri 2a: insights into pathogenicity through comparison with genomes of Escherichia coli K12 and O157.</title>
        <authorList>
            <person name="Jin Q."/>
            <person name="Yuan Z."/>
            <person name="Xu J."/>
            <person name="Wang Y."/>
            <person name="Shen Y."/>
            <person name="Lu W."/>
            <person name="Wang J."/>
            <person name="Liu H."/>
            <person name="Yang J."/>
            <person name="Yang F."/>
            <person name="Zhang X."/>
            <person name="Zhang J."/>
            <person name="Yang G."/>
            <person name="Wu H."/>
            <person name="Qu D."/>
            <person name="Dong J."/>
            <person name="Sun L."/>
            <person name="Xue Y."/>
            <person name="Zhao A."/>
            <person name="Gao Y."/>
            <person name="Zhu J."/>
            <person name="Kan B."/>
            <person name="Ding K."/>
            <person name="Chen S."/>
            <person name="Cheng H."/>
            <person name="Yao Z."/>
            <person name="He B."/>
            <person name="Chen R."/>
            <person name="Ma D."/>
            <person name="Qiang B."/>
            <person name="Wen Y."/>
            <person name="Hou Y."/>
            <person name="Yu J."/>
        </authorList>
    </citation>
    <scope>NUCLEOTIDE SEQUENCE [LARGE SCALE GENOMIC DNA]</scope>
    <source>
        <strain>301 / Serotype 2a</strain>
    </source>
</reference>
<reference key="2">
    <citation type="journal article" date="2003" name="Infect. Immun.">
        <title>Complete genome sequence and comparative genomics of Shigella flexneri serotype 2a strain 2457T.</title>
        <authorList>
            <person name="Wei J."/>
            <person name="Goldberg M.B."/>
            <person name="Burland V."/>
            <person name="Venkatesan M.M."/>
            <person name="Deng W."/>
            <person name="Fournier G."/>
            <person name="Mayhew G.F."/>
            <person name="Plunkett G. III"/>
            <person name="Rose D.J."/>
            <person name="Darling A."/>
            <person name="Mau B."/>
            <person name="Perna N.T."/>
            <person name="Payne S.M."/>
            <person name="Runyen-Janecky L.J."/>
            <person name="Zhou S."/>
            <person name="Schwartz D.C."/>
            <person name="Blattner F.R."/>
        </authorList>
    </citation>
    <scope>NUCLEOTIDE SEQUENCE [LARGE SCALE GENOMIC DNA]</scope>
    <source>
        <strain>ATCC 700930 / 2457T / Serotype 2a</strain>
    </source>
</reference>
<proteinExistence type="inferred from homology"/>
<dbReference type="EMBL" id="AE005674">
    <property type="protein sequence ID" value="AAN45259.1"/>
    <property type="status" value="ALT_INIT"/>
    <property type="molecule type" value="Genomic_DNA"/>
</dbReference>
<dbReference type="EMBL" id="AE014073">
    <property type="protein sequence ID" value="AAP18938.1"/>
    <property type="status" value="ALT_INIT"/>
    <property type="molecule type" value="Genomic_DNA"/>
</dbReference>
<dbReference type="RefSeq" id="NP_709552.3">
    <property type="nucleotide sequence ID" value="NC_004337.2"/>
</dbReference>
<dbReference type="RefSeq" id="WP_000116695.1">
    <property type="nucleotide sequence ID" value="NZ_WPGW01000050.1"/>
</dbReference>
<dbReference type="SMR" id="P0ABC2"/>
<dbReference type="STRING" id="198214.SF3819"/>
<dbReference type="PaxDb" id="198214-SF3819"/>
<dbReference type="GeneID" id="1026086"/>
<dbReference type="GeneID" id="75205457"/>
<dbReference type="KEGG" id="sfl:SF3819"/>
<dbReference type="KEGG" id="sfx:S3949"/>
<dbReference type="PATRIC" id="fig|198214.7.peg.4506"/>
<dbReference type="HOGENOM" id="CLU_121415_2_0_6"/>
<dbReference type="Proteomes" id="UP000001006">
    <property type="component" value="Chromosome"/>
</dbReference>
<dbReference type="Proteomes" id="UP000002673">
    <property type="component" value="Chromosome"/>
</dbReference>
<dbReference type="GO" id="GO:0005886">
    <property type="term" value="C:plasma membrane"/>
    <property type="evidence" value="ECO:0007669"/>
    <property type="project" value="UniProtKB-SubCell"/>
</dbReference>
<dbReference type="GO" id="GO:0045259">
    <property type="term" value="C:proton-transporting ATP synthase complex"/>
    <property type="evidence" value="ECO:0007669"/>
    <property type="project" value="UniProtKB-KW"/>
</dbReference>
<dbReference type="GO" id="GO:1902600">
    <property type="term" value="P:proton transmembrane transport"/>
    <property type="evidence" value="ECO:0007669"/>
    <property type="project" value="UniProtKB-KW"/>
</dbReference>
<dbReference type="InterPro" id="IPR005598">
    <property type="entry name" value="ATP_synth_I"/>
</dbReference>
<dbReference type="NCBIfam" id="NF005962">
    <property type="entry name" value="PRK08049.1"/>
    <property type="match status" value="1"/>
</dbReference>
<dbReference type="Pfam" id="PF03899">
    <property type="entry name" value="ATP-synt_I"/>
    <property type="match status" value="1"/>
</dbReference>
<sequence>MSVSLVSRNVARKLLLVQLLVVIASGLLFSLKDPFWGVSAISGGLAVFLPNVLFMIFAWRHQAHTPAKGRVAWTFAFGEAFKVLAMLVLLVVALAVLKAVFLPLIVTWVLVLVVQILAPAVINNKG</sequence>
<organism>
    <name type="scientific">Shigella flexneri</name>
    <dbReference type="NCBI Taxonomy" id="623"/>
    <lineage>
        <taxon>Bacteria</taxon>
        <taxon>Pseudomonadati</taxon>
        <taxon>Pseudomonadota</taxon>
        <taxon>Gammaproteobacteria</taxon>
        <taxon>Enterobacterales</taxon>
        <taxon>Enterobacteriaceae</taxon>
        <taxon>Shigella</taxon>
    </lineage>
</organism>
<name>ATPZ_SHIFL</name>
<accession>P0ABC2</accession>
<accession>P03808</accession>
<accession>P76747</accession>
<accession>Q47248</accession>
<evidence type="ECO:0000250" key="1"/>
<evidence type="ECO:0000255" key="2"/>
<evidence type="ECO:0000305" key="3"/>
<gene>
    <name type="primary">atpI</name>
    <name type="ordered locus">SF3819</name>
    <name type="ordered locus">S3949</name>
</gene>